<protein>
    <recommendedName>
        <fullName evidence="1">Small ribosomal subunit protein bS16</fullName>
    </recommendedName>
    <alternativeName>
        <fullName evidence="2">30S ribosomal protein S16</fullName>
    </alternativeName>
</protein>
<comment type="similarity">
    <text evidence="1">Belongs to the bacterial ribosomal protein bS16 family.</text>
</comment>
<gene>
    <name evidence="1" type="primary">rpsP</name>
    <name type="ordered locus">PMI0383</name>
</gene>
<organism>
    <name type="scientific">Proteus mirabilis (strain HI4320)</name>
    <dbReference type="NCBI Taxonomy" id="529507"/>
    <lineage>
        <taxon>Bacteria</taxon>
        <taxon>Pseudomonadati</taxon>
        <taxon>Pseudomonadota</taxon>
        <taxon>Gammaproteobacteria</taxon>
        <taxon>Enterobacterales</taxon>
        <taxon>Morganellaceae</taxon>
        <taxon>Proteus</taxon>
    </lineage>
</organism>
<dbReference type="EMBL" id="AM942759">
    <property type="protein sequence ID" value="CAR40983.1"/>
    <property type="molecule type" value="Genomic_DNA"/>
</dbReference>
<dbReference type="RefSeq" id="WP_004244772.1">
    <property type="nucleotide sequence ID" value="NC_010554.1"/>
</dbReference>
<dbReference type="SMR" id="B4EUW4"/>
<dbReference type="EnsemblBacteria" id="CAR40983">
    <property type="protein sequence ID" value="CAR40983"/>
    <property type="gene ID" value="PMI0383"/>
</dbReference>
<dbReference type="GeneID" id="93395155"/>
<dbReference type="KEGG" id="pmr:PMI0383"/>
<dbReference type="eggNOG" id="COG0228">
    <property type="taxonomic scope" value="Bacteria"/>
</dbReference>
<dbReference type="HOGENOM" id="CLU_100590_5_1_6"/>
<dbReference type="Proteomes" id="UP000008319">
    <property type="component" value="Chromosome"/>
</dbReference>
<dbReference type="GO" id="GO:0005737">
    <property type="term" value="C:cytoplasm"/>
    <property type="evidence" value="ECO:0007669"/>
    <property type="project" value="UniProtKB-ARBA"/>
</dbReference>
<dbReference type="GO" id="GO:0015935">
    <property type="term" value="C:small ribosomal subunit"/>
    <property type="evidence" value="ECO:0007669"/>
    <property type="project" value="TreeGrafter"/>
</dbReference>
<dbReference type="GO" id="GO:0003735">
    <property type="term" value="F:structural constituent of ribosome"/>
    <property type="evidence" value="ECO:0007669"/>
    <property type="project" value="InterPro"/>
</dbReference>
<dbReference type="GO" id="GO:0006412">
    <property type="term" value="P:translation"/>
    <property type="evidence" value="ECO:0007669"/>
    <property type="project" value="UniProtKB-UniRule"/>
</dbReference>
<dbReference type="FunFam" id="3.30.1320.10:FF:000001">
    <property type="entry name" value="30S ribosomal protein S16"/>
    <property type="match status" value="1"/>
</dbReference>
<dbReference type="Gene3D" id="3.30.1320.10">
    <property type="match status" value="1"/>
</dbReference>
<dbReference type="HAMAP" id="MF_00385">
    <property type="entry name" value="Ribosomal_bS16"/>
    <property type="match status" value="1"/>
</dbReference>
<dbReference type="InterPro" id="IPR000307">
    <property type="entry name" value="Ribosomal_bS16"/>
</dbReference>
<dbReference type="InterPro" id="IPR020592">
    <property type="entry name" value="Ribosomal_bS16_CS"/>
</dbReference>
<dbReference type="InterPro" id="IPR023803">
    <property type="entry name" value="Ribosomal_bS16_dom_sf"/>
</dbReference>
<dbReference type="NCBIfam" id="TIGR00002">
    <property type="entry name" value="S16"/>
    <property type="match status" value="1"/>
</dbReference>
<dbReference type="PANTHER" id="PTHR12919">
    <property type="entry name" value="30S RIBOSOMAL PROTEIN S16"/>
    <property type="match status" value="1"/>
</dbReference>
<dbReference type="PANTHER" id="PTHR12919:SF20">
    <property type="entry name" value="SMALL RIBOSOMAL SUBUNIT PROTEIN BS16M"/>
    <property type="match status" value="1"/>
</dbReference>
<dbReference type="Pfam" id="PF00886">
    <property type="entry name" value="Ribosomal_S16"/>
    <property type="match status" value="1"/>
</dbReference>
<dbReference type="SUPFAM" id="SSF54565">
    <property type="entry name" value="Ribosomal protein S16"/>
    <property type="match status" value="1"/>
</dbReference>
<dbReference type="PROSITE" id="PS00732">
    <property type="entry name" value="RIBOSOMAL_S16"/>
    <property type="match status" value="1"/>
</dbReference>
<keyword id="KW-1185">Reference proteome</keyword>
<keyword id="KW-0687">Ribonucleoprotein</keyword>
<keyword id="KW-0689">Ribosomal protein</keyword>
<evidence type="ECO:0000255" key="1">
    <source>
        <dbReference type="HAMAP-Rule" id="MF_00385"/>
    </source>
</evidence>
<evidence type="ECO:0000305" key="2"/>
<feature type="chain" id="PRO_1000196457" description="Small ribosomal subunit protein bS16">
    <location>
        <begin position="1"/>
        <end position="82"/>
    </location>
</feature>
<name>RS16_PROMH</name>
<proteinExistence type="inferred from homology"/>
<sequence length="82" mass="9101">MVTIRLARGGAKKRPFYQVVVTDSRNARDGRFIERVGFYNPLATGNAEELRLDVDRVEHWVAQGATVSERVAGLIKSAKKSA</sequence>
<accession>B4EUW4</accession>
<reference key="1">
    <citation type="journal article" date="2008" name="J. Bacteriol.">
        <title>Complete genome sequence of uropathogenic Proteus mirabilis, a master of both adherence and motility.</title>
        <authorList>
            <person name="Pearson M.M."/>
            <person name="Sebaihia M."/>
            <person name="Churcher C."/>
            <person name="Quail M.A."/>
            <person name="Seshasayee A.S."/>
            <person name="Luscombe N.M."/>
            <person name="Abdellah Z."/>
            <person name="Arrosmith C."/>
            <person name="Atkin B."/>
            <person name="Chillingworth T."/>
            <person name="Hauser H."/>
            <person name="Jagels K."/>
            <person name="Moule S."/>
            <person name="Mungall K."/>
            <person name="Norbertczak H."/>
            <person name="Rabbinowitsch E."/>
            <person name="Walker D."/>
            <person name="Whithead S."/>
            <person name="Thomson N.R."/>
            <person name="Rather P.N."/>
            <person name="Parkhill J."/>
            <person name="Mobley H.L.T."/>
        </authorList>
    </citation>
    <scope>NUCLEOTIDE SEQUENCE [LARGE SCALE GENOMIC DNA]</scope>
    <source>
        <strain>HI4320</strain>
    </source>
</reference>